<protein>
    <recommendedName>
        <fullName>Putative RNA-binding protein RbpE</fullName>
    </recommendedName>
</protein>
<organism>
    <name type="scientific">Nostoc sp. (strain PCC 7120 / SAG 25.82 / UTEX 2576)</name>
    <dbReference type="NCBI Taxonomy" id="103690"/>
    <lineage>
        <taxon>Bacteria</taxon>
        <taxon>Bacillati</taxon>
        <taxon>Cyanobacteriota</taxon>
        <taxon>Cyanophyceae</taxon>
        <taxon>Nostocales</taxon>
        <taxon>Nostocaceae</taxon>
        <taxon>Nostoc</taxon>
    </lineage>
</organism>
<dbReference type="EMBL" id="BA000019">
    <property type="protein sequence ID" value="BAB74476.1"/>
    <property type="molecule type" value="Genomic_DNA"/>
</dbReference>
<dbReference type="PIR" id="AB2153">
    <property type="entry name" value="AB2153"/>
</dbReference>
<dbReference type="RefSeq" id="WP_010996928.1">
    <property type="nucleotide sequence ID" value="NZ_RSCN01000003.1"/>
</dbReference>
<dbReference type="SMR" id="Q9WX37"/>
<dbReference type="STRING" id="103690.gene:10494811"/>
<dbReference type="KEGG" id="ana:all2777"/>
<dbReference type="eggNOG" id="COG0724">
    <property type="taxonomic scope" value="Bacteria"/>
</dbReference>
<dbReference type="OrthoDB" id="465979at2"/>
<dbReference type="Proteomes" id="UP000002483">
    <property type="component" value="Chromosome"/>
</dbReference>
<dbReference type="GO" id="GO:0003723">
    <property type="term" value="F:RNA binding"/>
    <property type="evidence" value="ECO:0007669"/>
    <property type="project" value="UniProtKB-KW"/>
</dbReference>
<dbReference type="FunFam" id="3.30.70.330:FF:001284">
    <property type="entry name" value="RNA-binding protein"/>
    <property type="match status" value="1"/>
</dbReference>
<dbReference type="Gene3D" id="3.30.70.330">
    <property type="match status" value="1"/>
</dbReference>
<dbReference type="InterPro" id="IPR012677">
    <property type="entry name" value="Nucleotide-bd_a/b_plait_sf"/>
</dbReference>
<dbReference type="InterPro" id="IPR035979">
    <property type="entry name" value="RBD_domain_sf"/>
</dbReference>
<dbReference type="InterPro" id="IPR000504">
    <property type="entry name" value="RRM_dom"/>
</dbReference>
<dbReference type="InterPro" id="IPR052462">
    <property type="entry name" value="SLIRP/GR-RBP-like"/>
</dbReference>
<dbReference type="PANTHER" id="PTHR48027">
    <property type="entry name" value="HETEROGENEOUS NUCLEAR RIBONUCLEOPROTEIN 87F-RELATED"/>
    <property type="match status" value="1"/>
</dbReference>
<dbReference type="Pfam" id="PF00076">
    <property type="entry name" value="RRM_1"/>
    <property type="match status" value="1"/>
</dbReference>
<dbReference type="SMART" id="SM00360">
    <property type="entry name" value="RRM"/>
    <property type="match status" value="1"/>
</dbReference>
<dbReference type="SUPFAM" id="SSF54928">
    <property type="entry name" value="RNA-binding domain, RBD"/>
    <property type="match status" value="1"/>
</dbReference>
<dbReference type="PROSITE" id="PS50102">
    <property type="entry name" value="RRM"/>
    <property type="match status" value="1"/>
</dbReference>
<name>RBPE_NOSS1</name>
<sequence length="99" mass="10811">MSIYVGNLSYSVTQDDLTKVFSEYGSVTRVQLPTDRETGRVRGFGFVEMESSAAEDAAIQALDGAEWMGRVLKVNKARPREEKGARSGGGSWSRNNGGY</sequence>
<evidence type="ECO:0000250" key="1"/>
<evidence type="ECO:0000255" key="2">
    <source>
        <dbReference type="PROSITE-ProRule" id="PRU00176"/>
    </source>
</evidence>
<evidence type="ECO:0000256" key="3">
    <source>
        <dbReference type="SAM" id="MobiDB-lite"/>
    </source>
</evidence>
<feature type="initiator methionine" description="Removed" evidence="1">
    <location>
        <position position="1"/>
    </location>
</feature>
<feature type="chain" id="PRO_0000262941" description="Putative RNA-binding protein RbpE">
    <location>
        <begin position="2"/>
        <end position="99"/>
    </location>
</feature>
<feature type="domain" description="RRM" evidence="2">
    <location>
        <begin position="2"/>
        <end position="79"/>
    </location>
</feature>
<feature type="region of interest" description="Disordered" evidence="3">
    <location>
        <begin position="78"/>
        <end position="99"/>
    </location>
</feature>
<feature type="compositionally biased region" description="Gly residues" evidence="3">
    <location>
        <begin position="86"/>
        <end position="99"/>
    </location>
</feature>
<accession>Q9WX37</accession>
<gene>
    <name type="primary">rbpE</name>
    <name type="ordered locus">all2777</name>
</gene>
<reference key="1">
    <citation type="journal article" date="2001" name="DNA Res.">
        <title>Complete genomic sequence of the filamentous nitrogen-fixing cyanobacterium Anabaena sp. strain PCC 7120.</title>
        <authorList>
            <person name="Kaneko T."/>
            <person name="Nakamura Y."/>
            <person name="Wolk C.P."/>
            <person name="Kuritz T."/>
            <person name="Sasamoto S."/>
            <person name="Watanabe A."/>
            <person name="Iriguchi M."/>
            <person name="Ishikawa A."/>
            <person name="Kawashima K."/>
            <person name="Kimura T."/>
            <person name="Kishida Y."/>
            <person name="Kohara M."/>
            <person name="Matsumoto M."/>
            <person name="Matsuno A."/>
            <person name="Muraki A."/>
            <person name="Nakazaki N."/>
            <person name="Shimpo S."/>
            <person name="Sugimoto M."/>
            <person name="Takazawa M."/>
            <person name="Yamada M."/>
            <person name="Yasuda M."/>
            <person name="Tabata S."/>
        </authorList>
    </citation>
    <scope>NUCLEOTIDE SEQUENCE [LARGE SCALE GENOMIC DNA]</scope>
    <source>
        <strain>PCC 7120 / SAG 25.82 / UTEX 2576</strain>
    </source>
</reference>
<proteinExistence type="inferred from homology"/>
<keyword id="KW-1185">Reference proteome</keyword>
<keyword id="KW-0694">RNA-binding</keyword>